<protein>
    <recommendedName>
        <fullName>Altronate dehydratase</fullName>
        <ecNumber>4.2.1.7</ecNumber>
    </recommendedName>
    <alternativeName>
        <fullName>D-altronate hydro-lyase</fullName>
    </alternativeName>
</protein>
<comment type="function">
    <text evidence="1">Catalyzes the dehydration of D-altronate.</text>
</comment>
<comment type="catalytic activity">
    <reaction>
        <text>D-altronate = 2-dehydro-3-deoxy-D-gluconate + H2O</text>
        <dbReference type="Rhea" id="RHEA:15957"/>
        <dbReference type="ChEBI" id="CHEBI:15377"/>
        <dbReference type="ChEBI" id="CHEBI:17360"/>
        <dbReference type="ChEBI" id="CHEBI:57990"/>
        <dbReference type="EC" id="4.2.1.7"/>
    </reaction>
</comment>
<comment type="cofactor">
    <cofactor evidence="1">
        <name>Fe(2+)</name>
        <dbReference type="ChEBI" id="CHEBI:29033"/>
    </cofactor>
    <cofactor evidence="1">
        <name>Mn(2+)</name>
        <dbReference type="ChEBI" id="CHEBI:29035"/>
    </cofactor>
</comment>
<comment type="pathway">
    <text>Carbohydrate metabolism; pentose and glucuronate interconversion.</text>
</comment>
<comment type="induction">
    <text evidence="3">Induced by galacturonate, repressed by glucose.</text>
</comment>
<comment type="miscellaneous">
    <text>Last gene in the exu locus which is required for galacturonate utilization.</text>
</comment>
<comment type="similarity">
    <text evidence="2">Belongs to the UxaA family.</text>
</comment>
<accession>O34673</accession>
<dbReference type="EC" id="4.2.1.7"/>
<dbReference type="EMBL" id="AF015825">
    <property type="protein sequence ID" value="AAC46335.1"/>
    <property type="molecule type" value="Genomic_DNA"/>
</dbReference>
<dbReference type="EMBL" id="AL009126">
    <property type="protein sequence ID" value="CAB13096.2"/>
    <property type="molecule type" value="Genomic_DNA"/>
</dbReference>
<dbReference type="PIR" id="D69853">
    <property type="entry name" value="D69853"/>
</dbReference>
<dbReference type="RefSeq" id="NP_389121.2">
    <property type="nucleotide sequence ID" value="NC_000964.3"/>
</dbReference>
<dbReference type="RefSeq" id="WP_003245409.1">
    <property type="nucleotide sequence ID" value="NZ_OZ025638.1"/>
</dbReference>
<dbReference type="SMR" id="O34673"/>
<dbReference type="FunCoup" id="O34673">
    <property type="interactions" value="127"/>
</dbReference>
<dbReference type="STRING" id="224308.BSU12390"/>
<dbReference type="PaxDb" id="224308-BSU12390"/>
<dbReference type="EnsemblBacteria" id="CAB13096">
    <property type="protein sequence ID" value="CAB13096"/>
    <property type="gene ID" value="BSU_12390"/>
</dbReference>
<dbReference type="GeneID" id="939837"/>
<dbReference type="KEGG" id="bsu:BSU12390"/>
<dbReference type="PATRIC" id="fig|224308.179.peg.1340"/>
<dbReference type="eggNOG" id="COG2721">
    <property type="taxonomic scope" value="Bacteria"/>
</dbReference>
<dbReference type="InParanoid" id="O34673"/>
<dbReference type="OrthoDB" id="9804574at2"/>
<dbReference type="PhylomeDB" id="O34673"/>
<dbReference type="BioCyc" id="BSUB:BSU12390-MONOMER"/>
<dbReference type="UniPathway" id="UPA00246"/>
<dbReference type="Proteomes" id="UP000001570">
    <property type="component" value="Chromosome"/>
</dbReference>
<dbReference type="GO" id="GO:0008789">
    <property type="term" value="F:altronate dehydratase activity"/>
    <property type="evidence" value="ECO:0007669"/>
    <property type="project" value="UniProtKB-EC"/>
</dbReference>
<dbReference type="GO" id="GO:0019698">
    <property type="term" value="P:D-galacturonate catabolic process"/>
    <property type="evidence" value="ECO:0000318"/>
    <property type="project" value="GO_Central"/>
</dbReference>
<dbReference type="CDD" id="cd11613">
    <property type="entry name" value="SAF_AH_GD"/>
    <property type="match status" value="1"/>
</dbReference>
<dbReference type="Gene3D" id="2.30.130.110">
    <property type="match status" value="1"/>
</dbReference>
<dbReference type="InterPro" id="IPR048332">
    <property type="entry name" value="GD_AH_C"/>
</dbReference>
<dbReference type="InterPro" id="IPR007392">
    <property type="entry name" value="GD_AH_second"/>
</dbReference>
<dbReference type="InterPro" id="IPR013974">
    <property type="entry name" value="SAF"/>
</dbReference>
<dbReference type="InterPro" id="IPR044144">
    <property type="entry name" value="UxaA/GarD_SAF"/>
</dbReference>
<dbReference type="InterPro" id="IPR052172">
    <property type="entry name" value="UxaA_altronate/galactarate_dh"/>
</dbReference>
<dbReference type="PANTHER" id="PTHR30536:SF5">
    <property type="entry name" value="ALTRONATE DEHYDRATASE"/>
    <property type="match status" value="1"/>
</dbReference>
<dbReference type="PANTHER" id="PTHR30536">
    <property type="entry name" value="ALTRONATE/GALACTARATE DEHYDRATASE"/>
    <property type="match status" value="1"/>
</dbReference>
<dbReference type="Pfam" id="PF20629">
    <property type="entry name" value="GD_AH_C"/>
    <property type="match status" value="1"/>
</dbReference>
<dbReference type="Pfam" id="PF04295">
    <property type="entry name" value="GD_AH_second"/>
    <property type="match status" value="1"/>
</dbReference>
<dbReference type="Pfam" id="PF08666">
    <property type="entry name" value="SAF"/>
    <property type="match status" value="1"/>
</dbReference>
<dbReference type="SMART" id="SM00858">
    <property type="entry name" value="SAF"/>
    <property type="match status" value="1"/>
</dbReference>
<proteinExistence type="evidence at transcript level"/>
<gene>
    <name type="primary">uxaA</name>
    <name type="synonym">yjmJ</name>
    <name type="ordered locus">BSU12390</name>
</gene>
<reference key="1">
    <citation type="journal article" date="1998" name="Microbiology">
        <title>A 35.7 kb DNA fragment from the Bacillus subtilis chromosome containing a putative 12.3 kb operon involved in hexuronate catabolism and a perfectly symmetrical hypothetical catabolite-responsive element.</title>
        <authorList>
            <person name="Rivolta C."/>
            <person name="Soldo B."/>
            <person name="Lazarevic V."/>
            <person name="Joris B."/>
            <person name="Mauel C."/>
            <person name="Karamata D."/>
        </authorList>
    </citation>
    <scope>NUCLEOTIDE SEQUENCE [GENOMIC DNA]</scope>
    <scope>PROBABLE OPERON STRUCTURE</scope>
    <source>
        <strain>168</strain>
    </source>
</reference>
<reference key="2">
    <citation type="journal article" date="1997" name="Nature">
        <title>The complete genome sequence of the Gram-positive bacterium Bacillus subtilis.</title>
        <authorList>
            <person name="Kunst F."/>
            <person name="Ogasawara N."/>
            <person name="Moszer I."/>
            <person name="Albertini A.M."/>
            <person name="Alloni G."/>
            <person name="Azevedo V."/>
            <person name="Bertero M.G."/>
            <person name="Bessieres P."/>
            <person name="Bolotin A."/>
            <person name="Borchert S."/>
            <person name="Borriss R."/>
            <person name="Boursier L."/>
            <person name="Brans A."/>
            <person name="Braun M."/>
            <person name="Brignell S.C."/>
            <person name="Bron S."/>
            <person name="Brouillet S."/>
            <person name="Bruschi C.V."/>
            <person name="Caldwell B."/>
            <person name="Capuano V."/>
            <person name="Carter N.M."/>
            <person name="Choi S.-K."/>
            <person name="Codani J.-J."/>
            <person name="Connerton I.F."/>
            <person name="Cummings N.J."/>
            <person name="Daniel R.A."/>
            <person name="Denizot F."/>
            <person name="Devine K.M."/>
            <person name="Duesterhoeft A."/>
            <person name="Ehrlich S.D."/>
            <person name="Emmerson P.T."/>
            <person name="Entian K.-D."/>
            <person name="Errington J."/>
            <person name="Fabret C."/>
            <person name="Ferrari E."/>
            <person name="Foulger D."/>
            <person name="Fritz C."/>
            <person name="Fujita M."/>
            <person name="Fujita Y."/>
            <person name="Fuma S."/>
            <person name="Galizzi A."/>
            <person name="Galleron N."/>
            <person name="Ghim S.-Y."/>
            <person name="Glaser P."/>
            <person name="Goffeau A."/>
            <person name="Golightly E.J."/>
            <person name="Grandi G."/>
            <person name="Guiseppi G."/>
            <person name="Guy B.J."/>
            <person name="Haga K."/>
            <person name="Haiech J."/>
            <person name="Harwood C.R."/>
            <person name="Henaut A."/>
            <person name="Hilbert H."/>
            <person name="Holsappel S."/>
            <person name="Hosono S."/>
            <person name="Hullo M.-F."/>
            <person name="Itaya M."/>
            <person name="Jones L.-M."/>
            <person name="Joris B."/>
            <person name="Karamata D."/>
            <person name="Kasahara Y."/>
            <person name="Klaerr-Blanchard M."/>
            <person name="Klein C."/>
            <person name="Kobayashi Y."/>
            <person name="Koetter P."/>
            <person name="Koningstein G."/>
            <person name="Krogh S."/>
            <person name="Kumano M."/>
            <person name="Kurita K."/>
            <person name="Lapidus A."/>
            <person name="Lardinois S."/>
            <person name="Lauber J."/>
            <person name="Lazarevic V."/>
            <person name="Lee S.-M."/>
            <person name="Levine A."/>
            <person name="Liu H."/>
            <person name="Masuda S."/>
            <person name="Mauel C."/>
            <person name="Medigue C."/>
            <person name="Medina N."/>
            <person name="Mellado R.P."/>
            <person name="Mizuno M."/>
            <person name="Moestl D."/>
            <person name="Nakai S."/>
            <person name="Noback M."/>
            <person name="Noone D."/>
            <person name="O'Reilly M."/>
            <person name="Ogawa K."/>
            <person name="Ogiwara A."/>
            <person name="Oudega B."/>
            <person name="Park S.-H."/>
            <person name="Parro V."/>
            <person name="Pohl T.M."/>
            <person name="Portetelle D."/>
            <person name="Porwollik S."/>
            <person name="Prescott A.M."/>
            <person name="Presecan E."/>
            <person name="Pujic P."/>
            <person name="Purnelle B."/>
            <person name="Rapoport G."/>
            <person name="Rey M."/>
            <person name="Reynolds S."/>
            <person name="Rieger M."/>
            <person name="Rivolta C."/>
            <person name="Rocha E."/>
            <person name="Roche B."/>
            <person name="Rose M."/>
            <person name="Sadaie Y."/>
            <person name="Sato T."/>
            <person name="Scanlan E."/>
            <person name="Schleich S."/>
            <person name="Schroeter R."/>
            <person name="Scoffone F."/>
            <person name="Sekiguchi J."/>
            <person name="Sekowska A."/>
            <person name="Seror S.J."/>
            <person name="Serror P."/>
            <person name="Shin B.-S."/>
            <person name="Soldo B."/>
            <person name="Sorokin A."/>
            <person name="Tacconi E."/>
            <person name="Takagi T."/>
            <person name="Takahashi H."/>
            <person name="Takemaru K."/>
            <person name="Takeuchi M."/>
            <person name="Tamakoshi A."/>
            <person name="Tanaka T."/>
            <person name="Terpstra P."/>
            <person name="Tognoni A."/>
            <person name="Tosato V."/>
            <person name="Uchiyama S."/>
            <person name="Vandenbol M."/>
            <person name="Vannier F."/>
            <person name="Vassarotti A."/>
            <person name="Viari A."/>
            <person name="Wambutt R."/>
            <person name="Wedler E."/>
            <person name="Wedler H."/>
            <person name="Weitzenegger T."/>
            <person name="Winters P."/>
            <person name="Wipat A."/>
            <person name="Yamamoto H."/>
            <person name="Yamane K."/>
            <person name="Yasumoto K."/>
            <person name="Yata K."/>
            <person name="Yoshida K."/>
            <person name="Yoshikawa H.-F."/>
            <person name="Zumstein E."/>
            <person name="Yoshikawa H."/>
            <person name="Danchin A."/>
        </authorList>
    </citation>
    <scope>NUCLEOTIDE SEQUENCE [LARGE SCALE GENOMIC DNA]</scope>
    <source>
        <strain>168</strain>
    </source>
</reference>
<reference key="3">
    <citation type="journal article" date="2009" name="Microbiology">
        <title>From a consortium sequence to a unified sequence: the Bacillus subtilis 168 reference genome a decade later.</title>
        <authorList>
            <person name="Barbe V."/>
            <person name="Cruveiller S."/>
            <person name="Kunst F."/>
            <person name="Lenoble P."/>
            <person name="Meurice G."/>
            <person name="Sekowska A."/>
            <person name="Vallenet D."/>
            <person name="Wang T."/>
            <person name="Moszer I."/>
            <person name="Medigue C."/>
            <person name="Danchin A."/>
        </authorList>
    </citation>
    <scope>SEQUENCE REVISION TO 19</scope>
</reference>
<reference key="4">
    <citation type="journal article" date="1999" name="J. Bacteriol.">
        <title>Regulation of hexuronate utilization in Bacillus subtilis.</title>
        <authorList>
            <person name="Mekjian K.R."/>
            <person name="Bryan E.M."/>
            <person name="Beall B.W."/>
            <person name="Moran C.P. Jr."/>
        </authorList>
    </citation>
    <scope>PROBABLE OPERON STRUCTURE</scope>
    <scope>INDUCTION</scope>
    <source>
        <strain>168 / MB24</strain>
    </source>
</reference>
<keyword id="KW-0408">Iron</keyword>
<keyword id="KW-0456">Lyase</keyword>
<keyword id="KW-0464">Manganese</keyword>
<keyword id="KW-1185">Reference proteome</keyword>
<sequence>MKSFIKIHKQDNVLLALRDIQKGERLHAYGVSIEVKDDIKRGHKIALQSIKENDSIVKYGFPIGHASQDISIGEHIHVHNTKTNLSDIQLYSYTPRFDENPYSNENRTFKGFRRENGDAGVRNELWIVPTVGCVNGIAEKMLQRFVRETGDIAPFDNVLVLKHQYGCSQLGDDHENTKQILLNAIRHPNAGGVLVLGLGCENNELARMKEALQDVNLKRVKFLESQSVTDEMEAGVALLKEIHEAAKGDKREDIPLSELKIGLKCGGSDGFSGITANPLLGRFSDYLIAQGGSTVLTEVPEMFGAETILMQRAANEEVFHKIVDLINDFKQYFIKHDQPVYENPSPGNKAGGISTLEDKSLGCTQKAGISPVTDVLKYGEVLKTKGLTLLSAPGNDLIASSALAAAGCQIVLFTTGRGTPFGTFVPTVKVATNTELYEAKPHWIDFNAGLLAEDDVHEEYVLREFIHYMIEVASGQLVNHEKNDFKELAIFKSGVTL</sequence>
<evidence type="ECO:0000250" key="1"/>
<evidence type="ECO:0000305" key="2"/>
<evidence type="ECO:0000305" key="3">
    <source>
    </source>
</evidence>
<name>UXAA_BACSU</name>
<organism>
    <name type="scientific">Bacillus subtilis (strain 168)</name>
    <dbReference type="NCBI Taxonomy" id="224308"/>
    <lineage>
        <taxon>Bacteria</taxon>
        <taxon>Bacillati</taxon>
        <taxon>Bacillota</taxon>
        <taxon>Bacilli</taxon>
        <taxon>Bacillales</taxon>
        <taxon>Bacillaceae</taxon>
        <taxon>Bacillus</taxon>
    </lineage>
</organism>
<feature type="chain" id="PRO_0000172282" description="Altronate dehydratase">
    <location>
        <begin position="1"/>
        <end position="497"/>
    </location>
</feature>
<feature type="sequence conflict" description="In Ref. 1; AAC46335." evidence="2" ref="1">
    <original>D</original>
    <variation>Y</variation>
    <location>
        <position position="19"/>
    </location>
</feature>